<sequence>MATMVPTEFDTIAAISTPPGEGAISIVRLSGEDAVKIANKVFKGKNLEKVPTHTINYGHIVNPKTNEELDEVMVSVMLAPRTFTREDVIEINCHGGIVPTNQILQLLLSNGARLAEPGEFTKRAFLHGRIDLTQAESVMDLIRAKTDRSMKVALNQLDGNLSHLIRNLRQDILDVLAQVEVNIDYPEYDDVETLTTKMLREKAIEVKKSIQQLLTTAKQGKVLREGLATAIVGRPNVGKSSLLNHLLHEDKAIVTDIAGTTRDVIEEYVNVRGVPLKLIDTAGIRETEDKVERIGVERSRKAIEQADLVMLVLNASEELTDEDKELIQATSGKKRIVILNKTDLPQKLNMDEVRELVPEDELITTSVLKKTGVDKLEEKIAELFFGGIENSQSTIMVTNARHIALLNQAEDSLDAVLQGLDSGMPVDLCQIDMTNAWDELGEITGDSYQDELLTQLFSQFCLGK</sequence>
<reference key="1">
    <citation type="journal article" date="2006" name="Proc. Natl. Acad. Sci. U.S.A.">
        <title>Multireplicon genome architecture of Lactobacillus salivarius.</title>
        <authorList>
            <person name="Claesson M.J."/>
            <person name="Li Y."/>
            <person name="Leahy S."/>
            <person name="Canchaya C."/>
            <person name="van Pijkeren J.P."/>
            <person name="Cerdeno-Tarraga A.M."/>
            <person name="Parkhill J."/>
            <person name="Flynn S."/>
            <person name="O'Sullivan G.C."/>
            <person name="Collins J.K."/>
            <person name="Higgins D."/>
            <person name="Shanahan F."/>
            <person name="Fitzgerald G.F."/>
            <person name="van Sinderen D."/>
            <person name="O'Toole P.W."/>
        </authorList>
    </citation>
    <scope>NUCLEOTIDE SEQUENCE [LARGE SCALE GENOMIC DNA]</scope>
    <source>
        <strain>UCC118</strain>
    </source>
</reference>
<evidence type="ECO:0000255" key="1">
    <source>
        <dbReference type="HAMAP-Rule" id="MF_00379"/>
    </source>
</evidence>
<feature type="chain" id="PRO_0000345812" description="tRNA modification GTPase MnmE">
    <location>
        <begin position="1"/>
        <end position="464"/>
    </location>
</feature>
<feature type="domain" description="TrmE-type G">
    <location>
        <begin position="226"/>
        <end position="385"/>
    </location>
</feature>
<feature type="binding site" evidence="1">
    <location>
        <position position="28"/>
    </location>
    <ligand>
        <name>(6S)-5-formyl-5,6,7,8-tetrahydrofolate</name>
        <dbReference type="ChEBI" id="CHEBI:57457"/>
    </ligand>
</feature>
<feature type="binding site" evidence="1">
    <location>
        <position position="90"/>
    </location>
    <ligand>
        <name>(6S)-5-formyl-5,6,7,8-tetrahydrofolate</name>
        <dbReference type="ChEBI" id="CHEBI:57457"/>
    </ligand>
</feature>
<feature type="binding site" evidence="1">
    <location>
        <position position="129"/>
    </location>
    <ligand>
        <name>(6S)-5-formyl-5,6,7,8-tetrahydrofolate</name>
        <dbReference type="ChEBI" id="CHEBI:57457"/>
    </ligand>
</feature>
<feature type="binding site" evidence="1">
    <location>
        <begin position="236"/>
        <end position="241"/>
    </location>
    <ligand>
        <name>GTP</name>
        <dbReference type="ChEBI" id="CHEBI:37565"/>
    </ligand>
</feature>
<feature type="binding site" evidence="1">
    <location>
        <position position="236"/>
    </location>
    <ligand>
        <name>K(+)</name>
        <dbReference type="ChEBI" id="CHEBI:29103"/>
    </ligand>
</feature>
<feature type="binding site" evidence="1">
    <location>
        <position position="240"/>
    </location>
    <ligand>
        <name>Mg(2+)</name>
        <dbReference type="ChEBI" id="CHEBI:18420"/>
    </ligand>
</feature>
<feature type="binding site" evidence="1">
    <location>
        <begin position="255"/>
        <end position="261"/>
    </location>
    <ligand>
        <name>GTP</name>
        <dbReference type="ChEBI" id="CHEBI:37565"/>
    </ligand>
</feature>
<feature type="binding site" evidence="1">
    <location>
        <position position="255"/>
    </location>
    <ligand>
        <name>K(+)</name>
        <dbReference type="ChEBI" id="CHEBI:29103"/>
    </ligand>
</feature>
<feature type="binding site" evidence="1">
    <location>
        <position position="257"/>
    </location>
    <ligand>
        <name>K(+)</name>
        <dbReference type="ChEBI" id="CHEBI:29103"/>
    </ligand>
</feature>
<feature type="binding site" evidence="1">
    <location>
        <position position="260"/>
    </location>
    <ligand>
        <name>K(+)</name>
        <dbReference type="ChEBI" id="CHEBI:29103"/>
    </ligand>
</feature>
<feature type="binding site" evidence="1">
    <location>
        <position position="261"/>
    </location>
    <ligand>
        <name>Mg(2+)</name>
        <dbReference type="ChEBI" id="CHEBI:18420"/>
    </ligand>
</feature>
<feature type="binding site" evidence="1">
    <location>
        <begin position="280"/>
        <end position="283"/>
    </location>
    <ligand>
        <name>GTP</name>
        <dbReference type="ChEBI" id="CHEBI:37565"/>
    </ligand>
</feature>
<feature type="binding site" evidence="1">
    <location>
        <position position="464"/>
    </location>
    <ligand>
        <name>(6S)-5-formyl-5,6,7,8-tetrahydrofolate</name>
        <dbReference type="ChEBI" id="CHEBI:57457"/>
    </ligand>
</feature>
<accession>Q1WVH7</accession>
<name>MNME_LIGS1</name>
<gene>
    <name evidence="1" type="primary">mnmE</name>
    <name evidence="1" type="synonym">trmE</name>
    <name type="ordered locus">LSL_0123</name>
</gene>
<organism>
    <name type="scientific">Ligilactobacillus salivarius (strain UCC118)</name>
    <name type="common">Lactobacillus salivarius</name>
    <dbReference type="NCBI Taxonomy" id="362948"/>
    <lineage>
        <taxon>Bacteria</taxon>
        <taxon>Bacillati</taxon>
        <taxon>Bacillota</taxon>
        <taxon>Bacilli</taxon>
        <taxon>Lactobacillales</taxon>
        <taxon>Lactobacillaceae</taxon>
        <taxon>Ligilactobacillus</taxon>
    </lineage>
</organism>
<dbReference type="EC" id="3.6.-.-" evidence="1"/>
<dbReference type="EMBL" id="CP000233">
    <property type="protein sequence ID" value="ABD98940.1"/>
    <property type="molecule type" value="Genomic_DNA"/>
</dbReference>
<dbReference type="RefSeq" id="WP_003700790.1">
    <property type="nucleotide sequence ID" value="NC_007929.1"/>
</dbReference>
<dbReference type="RefSeq" id="YP_535023.1">
    <property type="nucleotide sequence ID" value="NC_007929.1"/>
</dbReference>
<dbReference type="SMR" id="Q1WVH7"/>
<dbReference type="STRING" id="362948.LSL_0123"/>
<dbReference type="GeneID" id="89464859"/>
<dbReference type="KEGG" id="lsl:LSL_0123"/>
<dbReference type="PATRIC" id="fig|362948.14.peg.197"/>
<dbReference type="HOGENOM" id="CLU_019624_4_1_9"/>
<dbReference type="OrthoDB" id="9805918at2"/>
<dbReference type="Proteomes" id="UP000006559">
    <property type="component" value="Chromosome"/>
</dbReference>
<dbReference type="GO" id="GO:0005829">
    <property type="term" value="C:cytosol"/>
    <property type="evidence" value="ECO:0007669"/>
    <property type="project" value="TreeGrafter"/>
</dbReference>
<dbReference type="GO" id="GO:0005525">
    <property type="term" value="F:GTP binding"/>
    <property type="evidence" value="ECO:0007669"/>
    <property type="project" value="UniProtKB-UniRule"/>
</dbReference>
<dbReference type="GO" id="GO:0003924">
    <property type="term" value="F:GTPase activity"/>
    <property type="evidence" value="ECO:0007669"/>
    <property type="project" value="UniProtKB-UniRule"/>
</dbReference>
<dbReference type="GO" id="GO:0046872">
    <property type="term" value="F:metal ion binding"/>
    <property type="evidence" value="ECO:0007669"/>
    <property type="project" value="UniProtKB-KW"/>
</dbReference>
<dbReference type="GO" id="GO:0030488">
    <property type="term" value="P:tRNA methylation"/>
    <property type="evidence" value="ECO:0007669"/>
    <property type="project" value="TreeGrafter"/>
</dbReference>
<dbReference type="GO" id="GO:0002098">
    <property type="term" value="P:tRNA wobble uridine modification"/>
    <property type="evidence" value="ECO:0007669"/>
    <property type="project" value="TreeGrafter"/>
</dbReference>
<dbReference type="CDD" id="cd04164">
    <property type="entry name" value="trmE"/>
    <property type="match status" value="1"/>
</dbReference>
<dbReference type="CDD" id="cd14858">
    <property type="entry name" value="TrmE_N"/>
    <property type="match status" value="1"/>
</dbReference>
<dbReference type="FunFam" id="3.30.1360.120:FF:000003">
    <property type="entry name" value="tRNA modification GTPase MnmE"/>
    <property type="match status" value="1"/>
</dbReference>
<dbReference type="FunFam" id="3.40.50.300:FF:000494">
    <property type="entry name" value="tRNA modification GTPase MnmE"/>
    <property type="match status" value="1"/>
</dbReference>
<dbReference type="Gene3D" id="3.40.50.300">
    <property type="entry name" value="P-loop containing nucleotide triphosphate hydrolases"/>
    <property type="match status" value="1"/>
</dbReference>
<dbReference type="Gene3D" id="3.30.1360.120">
    <property type="entry name" value="Probable tRNA modification gtpase trme, domain 1"/>
    <property type="match status" value="1"/>
</dbReference>
<dbReference type="Gene3D" id="1.20.120.430">
    <property type="entry name" value="tRNA modification GTPase MnmE domain 2"/>
    <property type="match status" value="1"/>
</dbReference>
<dbReference type="HAMAP" id="MF_00379">
    <property type="entry name" value="GTPase_MnmE"/>
    <property type="match status" value="1"/>
</dbReference>
<dbReference type="InterPro" id="IPR031168">
    <property type="entry name" value="G_TrmE"/>
</dbReference>
<dbReference type="InterPro" id="IPR006073">
    <property type="entry name" value="GTP-bd"/>
</dbReference>
<dbReference type="InterPro" id="IPR018948">
    <property type="entry name" value="GTP-bd_TrmE_N"/>
</dbReference>
<dbReference type="InterPro" id="IPR004520">
    <property type="entry name" value="GTPase_MnmE"/>
</dbReference>
<dbReference type="InterPro" id="IPR027368">
    <property type="entry name" value="MnmE_dom2"/>
</dbReference>
<dbReference type="InterPro" id="IPR025867">
    <property type="entry name" value="MnmE_helical"/>
</dbReference>
<dbReference type="InterPro" id="IPR027417">
    <property type="entry name" value="P-loop_NTPase"/>
</dbReference>
<dbReference type="InterPro" id="IPR005225">
    <property type="entry name" value="Small_GTP-bd"/>
</dbReference>
<dbReference type="InterPro" id="IPR027266">
    <property type="entry name" value="TrmE/GcvT_dom1"/>
</dbReference>
<dbReference type="NCBIfam" id="TIGR00450">
    <property type="entry name" value="mnmE_trmE_thdF"/>
    <property type="match status" value="1"/>
</dbReference>
<dbReference type="NCBIfam" id="NF003661">
    <property type="entry name" value="PRK05291.1-3"/>
    <property type="match status" value="1"/>
</dbReference>
<dbReference type="NCBIfam" id="TIGR00231">
    <property type="entry name" value="small_GTP"/>
    <property type="match status" value="1"/>
</dbReference>
<dbReference type="PANTHER" id="PTHR42714">
    <property type="entry name" value="TRNA MODIFICATION GTPASE GTPBP3"/>
    <property type="match status" value="1"/>
</dbReference>
<dbReference type="PANTHER" id="PTHR42714:SF2">
    <property type="entry name" value="TRNA MODIFICATION GTPASE GTPBP3, MITOCHONDRIAL"/>
    <property type="match status" value="1"/>
</dbReference>
<dbReference type="Pfam" id="PF01926">
    <property type="entry name" value="MMR_HSR1"/>
    <property type="match status" value="1"/>
</dbReference>
<dbReference type="Pfam" id="PF12631">
    <property type="entry name" value="MnmE_helical"/>
    <property type="match status" value="1"/>
</dbReference>
<dbReference type="Pfam" id="PF10396">
    <property type="entry name" value="TrmE_N"/>
    <property type="match status" value="1"/>
</dbReference>
<dbReference type="SUPFAM" id="SSF52540">
    <property type="entry name" value="P-loop containing nucleoside triphosphate hydrolases"/>
    <property type="match status" value="1"/>
</dbReference>
<dbReference type="SUPFAM" id="SSF116878">
    <property type="entry name" value="TrmE connector domain"/>
    <property type="match status" value="1"/>
</dbReference>
<dbReference type="PROSITE" id="PS51709">
    <property type="entry name" value="G_TRME"/>
    <property type="match status" value="1"/>
</dbReference>
<protein>
    <recommendedName>
        <fullName evidence="1">tRNA modification GTPase MnmE</fullName>
        <ecNumber evidence="1">3.6.-.-</ecNumber>
    </recommendedName>
</protein>
<keyword id="KW-0963">Cytoplasm</keyword>
<keyword id="KW-0342">GTP-binding</keyword>
<keyword id="KW-0378">Hydrolase</keyword>
<keyword id="KW-0460">Magnesium</keyword>
<keyword id="KW-0479">Metal-binding</keyword>
<keyword id="KW-0547">Nucleotide-binding</keyword>
<keyword id="KW-0630">Potassium</keyword>
<keyword id="KW-1185">Reference proteome</keyword>
<keyword id="KW-0819">tRNA processing</keyword>
<comment type="function">
    <text evidence="1">Exhibits a very high intrinsic GTPase hydrolysis rate. Involved in the addition of a carboxymethylaminomethyl (cmnm) group at the wobble position (U34) of certain tRNAs, forming tRNA-cmnm(5)s(2)U34.</text>
</comment>
<comment type="cofactor">
    <cofactor evidence="1">
        <name>K(+)</name>
        <dbReference type="ChEBI" id="CHEBI:29103"/>
    </cofactor>
    <text evidence="1">Binds 1 potassium ion per subunit.</text>
</comment>
<comment type="subunit">
    <text evidence="1">Homodimer. Heterotetramer of two MnmE and two MnmG subunits.</text>
</comment>
<comment type="subcellular location">
    <subcellularLocation>
        <location evidence="1">Cytoplasm</location>
    </subcellularLocation>
</comment>
<comment type="similarity">
    <text evidence="1">Belongs to the TRAFAC class TrmE-Era-EngA-EngB-Septin-like GTPase superfamily. TrmE GTPase family.</text>
</comment>
<proteinExistence type="inferred from homology"/>